<reference key="1">
    <citation type="journal article" date="2004" name="Nature">
        <title>DNA sequence and analysis of human chromosome 9.</title>
        <authorList>
            <person name="Humphray S.J."/>
            <person name="Oliver K."/>
            <person name="Hunt A.R."/>
            <person name="Plumb R.W."/>
            <person name="Loveland J.E."/>
            <person name="Howe K.L."/>
            <person name="Andrews T.D."/>
            <person name="Searle S."/>
            <person name="Hunt S.E."/>
            <person name="Scott C.E."/>
            <person name="Jones M.C."/>
            <person name="Ainscough R."/>
            <person name="Almeida J.P."/>
            <person name="Ambrose K.D."/>
            <person name="Ashwell R.I.S."/>
            <person name="Babbage A.K."/>
            <person name="Babbage S."/>
            <person name="Bagguley C.L."/>
            <person name="Bailey J."/>
            <person name="Banerjee R."/>
            <person name="Barker D.J."/>
            <person name="Barlow K.F."/>
            <person name="Bates K."/>
            <person name="Beasley H."/>
            <person name="Beasley O."/>
            <person name="Bird C.P."/>
            <person name="Bray-Allen S."/>
            <person name="Brown A.J."/>
            <person name="Brown J.Y."/>
            <person name="Burford D."/>
            <person name="Burrill W."/>
            <person name="Burton J."/>
            <person name="Carder C."/>
            <person name="Carter N.P."/>
            <person name="Chapman J.C."/>
            <person name="Chen Y."/>
            <person name="Clarke G."/>
            <person name="Clark S.Y."/>
            <person name="Clee C.M."/>
            <person name="Clegg S."/>
            <person name="Collier R.E."/>
            <person name="Corby N."/>
            <person name="Crosier M."/>
            <person name="Cummings A.T."/>
            <person name="Davies J."/>
            <person name="Dhami P."/>
            <person name="Dunn M."/>
            <person name="Dutta I."/>
            <person name="Dyer L.W."/>
            <person name="Earthrowl M.E."/>
            <person name="Faulkner L."/>
            <person name="Fleming C.J."/>
            <person name="Frankish A."/>
            <person name="Frankland J.A."/>
            <person name="French L."/>
            <person name="Fricker D.G."/>
            <person name="Garner P."/>
            <person name="Garnett J."/>
            <person name="Ghori J."/>
            <person name="Gilbert J.G.R."/>
            <person name="Glison C."/>
            <person name="Grafham D.V."/>
            <person name="Gribble S."/>
            <person name="Griffiths C."/>
            <person name="Griffiths-Jones S."/>
            <person name="Grocock R."/>
            <person name="Guy J."/>
            <person name="Hall R.E."/>
            <person name="Hammond S."/>
            <person name="Harley J.L."/>
            <person name="Harrison E.S.I."/>
            <person name="Hart E.A."/>
            <person name="Heath P.D."/>
            <person name="Henderson C.D."/>
            <person name="Hopkins B.L."/>
            <person name="Howard P.J."/>
            <person name="Howden P.J."/>
            <person name="Huckle E."/>
            <person name="Johnson C."/>
            <person name="Johnson D."/>
            <person name="Joy A.A."/>
            <person name="Kay M."/>
            <person name="Keenan S."/>
            <person name="Kershaw J.K."/>
            <person name="Kimberley A.M."/>
            <person name="King A."/>
            <person name="Knights A."/>
            <person name="Laird G.K."/>
            <person name="Langford C."/>
            <person name="Lawlor S."/>
            <person name="Leongamornlert D.A."/>
            <person name="Leversha M."/>
            <person name="Lloyd C."/>
            <person name="Lloyd D.M."/>
            <person name="Lovell J."/>
            <person name="Martin S."/>
            <person name="Mashreghi-Mohammadi M."/>
            <person name="Matthews L."/>
            <person name="McLaren S."/>
            <person name="McLay K.E."/>
            <person name="McMurray A."/>
            <person name="Milne S."/>
            <person name="Nickerson T."/>
            <person name="Nisbett J."/>
            <person name="Nordsiek G."/>
            <person name="Pearce A.V."/>
            <person name="Peck A.I."/>
            <person name="Porter K.M."/>
            <person name="Pandian R."/>
            <person name="Pelan S."/>
            <person name="Phillimore B."/>
            <person name="Povey S."/>
            <person name="Ramsey Y."/>
            <person name="Rand V."/>
            <person name="Scharfe M."/>
            <person name="Sehra H.K."/>
            <person name="Shownkeen R."/>
            <person name="Sims S.K."/>
            <person name="Skuce C.D."/>
            <person name="Smith M."/>
            <person name="Steward C.A."/>
            <person name="Swarbreck D."/>
            <person name="Sycamore N."/>
            <person name="Tester J."/>
            <person name="Thorpe A."/>
            <person name="Tracey A."/>
            <person name="Tromans A."/>
            <person name="Thomas D.W."/>
            <person name="Wall M."/>
            <person name="Wallis J.M."/>
            <person name="West A.P."/>
            <person name="Whitehead S.L."/>
            <person name="Willey D.L."/>
            <person name="Williams S.A."/>
            <person name="Wilming L."/>
            <person name="Wray P.W."/>
            <person name="Young L."/>
            <person name="Ashurst J.L."/>
            <person name="Coulson A."/>
            <person name="Blocker H."/>
            <person name="Durbin R.M."/>
            <person name="Sulston J.E."/>
            <person name="Hubbard T."/>
            <person name="Jackson M.J."/>
            <person name="Bentley D.R."/>
            <person name="Beck S."/>
            <person name="Rogers J."/>
            <person name="Dunham I."/>
        </authorList>
    </citation>
    <scope>NUCLEOTIDE SEQUENCE [LARGE SCALE GENOMIC DNA]</scope>
</reference>
<reference key="2">
    <citation type="journal article" date="2017" name="Nature">
        <title>mTORC1 and muscle regeneration are regulated by the LINC00961-encoded SPAR polypeptide.</title>
        <authorList>
            <person name="Matsumoto A."/>
            <person name="Pasut A."/>
            <person name="Matsumoto M."/>
            <person name="Yamashita R."/>
            <person name="Fung J."/>
            <person name="Monteleone E."/>
            <person name="Saghatelian A."/>
            <person name="Nakayama K.I."/>
            <person name="Clohessy J.G."/>
            <person name="Pandolfi P.P."/>
        </authorList>
    </citation>
    <scope>FUNCTION (ISOFORM 2)</scope>
    <scope>SUBCELLULAR LOCATION</scope>
    <scope>TOPOLOGY</scope>
    <scope>TISSUE SPECIFICITY</scope>
    <scope>INTERACTION WITH ATP6V0A1 AND ATP6V0A2</scope>
</reference>
<sequence length="90" mass="9632">MGAKAPRGPKVAQWAMETAVIGVVVVLFVVTVAITCVLCCFSCDSRAQDPQGGPGRSFTVATFRQEASLFTGPVRHAQPVPSAQDFWTFM</sequence>
<comment type="function">
    <molecule>Isoform 2</molecule>
    <text evidence="1 3">Negative regulator of amino acid sensing and mTORC1, a signaling complex promoting cell growth in response to growth factors, energy levels and amino acids (PubMed:28024296). Negatively regulates mTORC1 activation by inhibiting recruitment of mTORC1 to lysosomes upon stimulation with amino acids: acts by promoting the formation of a tightly bound supercomplex composed of the lysosomal V-ATPase, Ragulator and Rag GTPases, preventing recruitment of mTORC1 (PubMed:28024296). Acts as a regulator of muscle regeneration following injury by regulating mTORC1 activation (By similarity).</text>
</comment>
<comment type="subunit">
    <text evidence="3">Interacts with components of the lysosomal V-ATPase complex (PubMed:28024296). Interacts with ATP6V0A1 (PubMed:28024296). Interacts with ATP6V0A2 (PubMed:28024296).</text>
</comment>
<comment type="subcellular location">
    <subcellularLocation>
        <location evidence="3">Late endosome membrane</location>
        <topology evidence="5">Single-pass membrane protein</topology>
    </subcellularLocation>
    <subcellularLocation>
        <location evidence="3">Lysosome membrane</location>
        <topology evidence="5">Single-pass membrane protein</topology>
    </subcellularLocation>
</comment>
<comment type="alternative products">
    <event type="alternative initiation"/>
    <isoform>
        <id>A0A1B0GVQ0-1</id>
        <name evidence="5">1</name>
        <sequence type="displayed"/>
    </isoform>
    <isoform>
        <id>A0A1B0GVQ0-2</id>
        <name evidence="5">2</name>
        <sequence type="described" ref="VSP_058780"/>
    </isoform>
</comment>
<comment type="tissue specificity">
    <text evidence="3">Highly expressed in lung, heart and skeletal muscle.</text>
</comment>
<gene>
    <name evidence="6" type="primary">SPAAR</name>
    <name evidence="6" type="synonym">LINC00961</name>
    <name evidence="4" type="synonym">SPAR</name>
</gene>
<feature type="chain" id="PRO_0000439038" description="Small regulatory polypeptide of amino acid response">
    <location>
        <begin position="1"/>
        <end position="90"/>
    </location>
</feature>
<feature type="topological domain" description="Lumenal" evidence="5">
    <location>
        <begin position="1"/>
        <end position="18"/>
    </location>
</feature>
<feature type="transmembrane region" description="Helical" evidence="2">
    <location>
        <begin position="19"/>
        <end position="39"/>
    </location>
</feature>
<feature type="topological domain" description="Cytoplasmic" evidence="5">
    <location>
        <begin position="40"/>
        <end position="90"/>
    </location>
</feature>
<feature type="splice variant" id="VSP_058780" description="In isoform 2." evidence="5">
    <location>
        <begin position="1"/>
        <end position="15"/>
    </location>
</feature>
<keyword id="KW-0024">Alternative initiation</keyword>
<keyword id="KW-0967">Endosome</keyword>
<keyword id="KW-0458">Lysosome</keyword>
<keyword id="KW-0472">Membrane</keyword>
<keyword id="KW-1267">Proteomics identification</keyword>
<keyword id="KW-1185">Reference proteome</keyword>
<keyword id="KW-0812">Transmembrane</keyword>
<keyword id="KW-1133">Transmembrane helix</keyword>
<proteinExistence type="evidence at protein level"/>
<name>SPAR_HUMAN</name>
<protein>
    <recommendedName>
        <fullName evidence="4">Small regulatory polypeptide of amino acid response</fullName>
    </recommendedName>
</protein>
<accession>A0A1B0GVQ0</accession>
<organism>
    <name type="scientific">Homo sapiens</name>
    <name type="common">Human</name>
    <dbReference type="NCBI Taxonomy" id="9606"/>
    <lineage>
        <taxon>Eukaryota</taxon>
        <taxon>Metazoa</taxon>
        <taxon>Chordata</taxon>
        <taxon>Craniata</taxon>
        <taxon>Vertebrata</taxon>
        <taxon>Euteleostomi</taxon>
        <taxon>Mammalia</taxon>
        <taxon>Eutheria</taxon>
        <taxon>Euarchontoglires</taxon>
        <taxon>Primates</taxon>
        <taxon>Haplorrhini</taxon>
        <taxon>Catarrhini</taxon>
        <taxon>Hominidae</taxon>
        <taxon>Homo</taxon>
    </lineage>
</organism>
<evidence type="ECO:0000250" key="1">
    <source>
        <dbReference type="UniProtKB" id="A0A1B0GSZ0"/>
    </source>
</evidence>
<evidence type="ECO:0000255" key="2"/>
<evidence type="ECO:0000269" key="3">
    <source>
    </source>
</evidence>
<evidence type="ECO:0000303" key="4">
    <source>
    </source>
</evidence>
<evidence type="ECO:0000305" key="5">
    <source>
    </source>
</evidence>
<evidence type="ECO:0000312" key="6">
    <source>
        <dbReference type="HGNC" id="HGNC:27244"/>
    </source>
</evidence>
<dbReference type="EMBL" id="AL135841">
    <property type="status" value="NOT_ANNOTATED_CDS"/>
    <property type="molecule type" value="Genomic_DNA"/>
</dbReference>
<dbReference type="CCDS" id="CCDS94407.1">
    <molecule id="A0A1B0GVQ0-2"/>
</dbReference>
<dbReference type="RefSeq" id="NP_001335036.2">
    <molecule id="A0A1B0GVQ0-2"/>
    <property type="nucleotide sequence ID" value="NM_001348107.3"/>
</dbReference>
<dbReference type="SMR" id="A0A1B0GVQ0"/>
<dbReference type="FunCoup" id="A0A1B0GVQ0">
    <property type="interactions" value="2"/>
</dbReference>
<dbReference type="STRING" id="9606.ENSP00000490187"/>
<dbReference type="BioMuta" id="SPAAR"/>
<dbReference type="MassIVE" id="A0A1B0GVQ0"/>
<dbReference type="PeptideAtlas" id="A0A1B0GVQ0"/>
<dbReference type="Antibodypedia" id="79062">
    <property type="antibodies" value="2 antibodies from 2 providers"/>
</dbReference>
<dbReference type="DNASU" id="158376"/>
<dbReference type="Ensembl" id="ENST00000443779.3">
    <molecule id="A0A1B0GVQ0-2"/>
    <property type="protein sequence ID" value="ENSP00000490187.1"/>
    <property type="gene ID" value="ENSG00000235387.5"/>
</dbReference>
<dbReference type="Ensembl" id="ENST00000636776.1">
    <molecule id="A0A1B0GVQ0-2"/>
    <property type="protein sequence ID" value="ENSP00000490606.1"/>
    <property type="gene ID" value="ENSG00000235387.5"/>
</dbReference>
<dbReference type="Ensembl" id="ENST00000638062.1">
    <molecule id="A0A1B0GVQ0-2"/>
    <property type="protein sequence ID" value="ENSP00000489755.1"/>
    <property type="gene ID" value="ENSG00000235387.5"/>
</dbReference>
<dbReference type="GeneID" id="158376"/>
<dbReference type="KEGG" id="hsa:158376"/>
<dbReference type="MANE-Select" id="ENST00000443779.3">
    <molecule id="A0A1B0GVQ0-2"/>
    <property type="protein sequence ID" value="ENSP00000490187.1"/>
    <property type="RefSeq nucleotide sequence ID" value="NM_001348107.3"/>
    <property type="RefSeq protein sequence ID" value="NP_001335036.2"/>
</dbReference>
<dbReference type="AGR" id="HGNC:27244"/>
<dbReference type="CTD" id="158376"/>
<dbReference type="DisGeNET" id="158376"/>
<dbReference type="GeneCards" id="SPAAR"/>
<dbReference type="HGNC" id="HGNC:27244">
    <property type="gene designation" value="SPAAR"/>
</dbReference>
<dbReference type="HPA" id="ENSG00000235387">
    <property type="expression patterns" value="Tissue enhanced (adipose tissue, breast)"/>
</dbReference>
<dbReference type="MIM" id="617627">
    <property type="type" value="gene"/>
</dbReference>
<dbReference type="neXtProt" id="NX_A0A1B0GVQ0"/>
<dbReference type="OpenTargets" id="ENSG00000235387"/>
<dbReference type="VEuPathDB" id="HostDB:ENSG00000235387"/>
<dbReference type="GeneTree" id="ENSGT00850000133592"/>
<dbReference type="InParanoid" id="A0A1B0GVQ0"/>
<dbReference type="OMA" id="CDSRTQD"/>
<dbReference type="OrthoDB" id="9832609at2759"/>
<dbReference type="PAN-GO" id="A0A1B0GVQ0">
    <property type="GO annotations" value="1 GO annotation based on evolutionary models"/>
</dbReference>
<dbReference type="PathwayCommons" id="A0A1B0GVQ0"/>
<dbReference type="SignaLink" id="A0A1B0GVQ0"/>
<dbReference type="GenomeRNAi" id="158376"/>
<dbReference type="Pharos" id="A0A1B0GVQ0">
    <property type="development level" value="Tbio"/>
</dbReference>
<dbReference type="PRO" id="PR:A0A1B0GVQ0"/>
<dbReference type="Proteomes" id="UP000005640">
    <property type="component" value="Chromosome 9"/>
</dbReference>
<dbReference type="RNAct" id="A0A1B0GVQ0">
    <property type="molecule type" value="protein"/>
</dbReference>
<dbReference type="Bgee" id="ENSG00000235387">
    <property type="expression patterns" value="Expressed in apex of heart and 128 other cell types or tissues"/>
</dbReference>
<dbReference type="GO" id="GO:0031902">
    <property type="term" value="C:late endosome membrane"/>
    <property type="evidence" value="ECO:0000314"/>
    <property type="project" value="UniProtKB"/>
</dbReference>
<dbReference type="GO" id="GO:0005765">
    <property type="term" value="C:lysosomal membrane"/>
    <property type="evidence" value="ECO:0000314"/>
    <property type="project" value="UniProtKB"/>
</dbReference>
<dbReference type="GO" id="GO:0071230">
    <property type="term" value="P:cellular response to amino acid stimulus"/>
    <property type="evidence" value="ECO:0000315"/>
    <property type="project" value="UniProtKB"/>
</dbReference>
<dbReference type="GO" id="GO:1904262">
    <property type="term" value="P:negative regulation of TORC1 signaling"/>
    <property type="evidence" value="ECO:0000315"/>
    <property type="project" value="UniProtKB"/>
</dbReference>
<dbReference type="GO" id="GO:0043416">
    <property type="term" value="P:regulation of skeletal muscle tissue regeneration"/>
    <property type="evidence" value="ECO:0000250"/>
    <property type="project" value="UniProtKB"/>
</dbReference>
<dbReference type="InterPro" id="IPR054161">
    <property type="entry name" value="SPAR"/>
</dbReference>
<dbReference type="Pfam" id="PF22004">
    <property type="entry name" value="SPAR"/>
    <property type="match status" value="1"/>
</dbReference>